<evidence type="ECO:0000305" key="1"/>
<sequence>MFVDVGLLHSGANESHYAGEHAHGGADQLSRGPLLSGMFGTFPVAQTFHDAVGAAHAQQMRNLHAHRQALITVGEKARHAATGFTDMDDGNAAELKAVVCSCAT</sequence>
<comment type="similarity">
    <text evidence="1">To M.tuberculosis Rv2078.</text>
</comment>
<keyword id="KW-1185">Reference proteome</keyword>
<organism>
    <name type="scientific">Mycobacterium bovis (strain ATCC BAA-935 / AF2122/97)</name>
    <dbReference type="NCBI Taxonomy" id="233413"/>
    <lineage>
        <taxon>Bacteria</taxon>
        <taxon>Bacillati</taxon>
        <taxon>Actinomycetota</taxon>
        <taxon>Actinomycetes</taxon>
        <taxon>Mycobacteriales</taxon>
        <taxon>Mycobacteriaceae</taxon>
        <taxon>Mycobacterium</taxon>
        <taxon>Mycobacterium tuberculosis complex</taxon>
    </lineage>
</organism>
<proteinExistence type="predicted"/>
<dbReference type="EMBL" id="LT708304">
    <property type="protein sequence ID" value="SIU00711.1"/>
    <property type="molecule type" value="Genomic_DNA"/>
</dbReference>
<dbReference type="RefSeq" id="NP_855754.1">
    <property type="nucleotide sequence ID" value="NC_002945.3"/>
</dbReference>
<dbReference type="RefSeq" id="WP_003410700.1">
    <property type="nucleotide sequence ID" value="NC_002945.4"/>
</dbReference>
<dbReference type="SMR" id="P59982"/>
<dbReference type="KEGG" id="mbo:BQ2027_MB2104"/>
<dbReference type="PATRIC" id="fig|233413.5.peg.2314"/>
<dbReference type="Proteomes" id="UP000001419">
    <property type="component" value="Chromosome"/>
</dbReference>
<dbReference type="InterPro" id="IPR022534">
    <property type="entry name" value="DUF2563"/>
</dbReference>
<dbReference type="Pfam" id="PF10817">
    <property type="entry name" value="DUF2563"/>
    <property type="match status" value="1"/>
</dbReference>
<accession>P59982</accession>
<accession>A0A1R3Y053</accession>
<accession>X2BJE3</accession>
<reference key="1">
    <citation type="journal article" date="2003" name="Proc. Natl. Acad. Sci. U.S.A.">
        <title>The complete genome sequence of Mycobacterium bovis.</title>
        <authorList>
            <person name="Garnier T."/>
            <person name="Eiglmeier K."/>
            <person name="Camus J.-C."/>
            <person name="Medina N."/>
            <person name="Mansoor H."/>
            <person name="Pryor M."/>
            <person name="Duthoy S."/>
            <person name="Grondin S."/>
            <person name="Lacroix C."/>
            <person name="Monsempe C."/>
            <person name="Simon S."/>
            <person name="Harris B."/>
            <person name="Atkin R."/>
            <person name="Doggett J."/>
            <person name="Mayes R."/>
            <person name="Keating L."/>
            <person name="Wheeler P.R."/>
            <person name="Parkhill J."/>
            <person name="Barrell B.G."/>
            <person name="Cole S.T."/>
            <person name="Gordon S.V."/>
            <person name="Hewinson R.G."/>
        </authorList>
    </citation>
    <scope>NUCLEOTIDE SEQUENCE [LARGE SCALE GENOMIC DNA]</scope>
    <source>
        <strain>ATCC BAA-935 / AF2122/97</strain>
    </source>
</reference>
<reference key="2">
    <citation type="journal article" date="2017" name="Genome Announc.">
        <title>Updated reference genome sequence and annotation of Mycobacterium bovis AF2122/97.</title>
        <authorList>
            <person name="Malone K.M."/>
            <person name="Farrell D."/>
            <person name="Stuber T.P."/>
            <person name="Schubert O.T."/>
            <person name="Aebersold R."/>
            <person name="Robbe-Austerman S."/>
            <person name="Gordon S.V."/>
        </authorList>
    </citation>
    <scope>NUCLEOTIDE SEQUENCE [LARGE SCALE GENOMIC DNA]</scope>
    <scope>GENOME REANNOTATION</scope>
    <source>
        <strain>ATCC BAA-935 / AF2122/97</strain>
    </source>
</reference>
<gene>
    <name type="ordered locus">BQ2027_MB2104</name>
</gene>
<feature type="chain" id="PRO_0000103949" description="Uncharacterized protein Mb2104">
    <location>
        <begin position="1"/>
        <end position="104"/>
    </location>
</feature>
<name>Y2104_MYCBO</name>
<protein>
    <recommendedName>
        <fullName>Uncharacterized protein Mb2104</fullName>
    </recommendedName>
</protein>